<dbReference type="EC" id="2.7.1.2" evidence="1"/>
<dbReference type="EMBL" id="CP001120">
    <property type="protein sequence ID" value="ACF65992.1"/>
    <property type="molecule type" value="Genomic_DNA"/>
</dbReference>
<dbReference type="RefSeq" id="WP_000170377.1">
    <property type="nucleotide sequence ID" value="NC_011083.1"/>
</dbReference>
<dbReference type="SMR" id="B4TCD7"/>
<dbReference type="KEGG" id="seh:SeHA_C2661"/>
<dbReference type="HOGENOM" id="CLU_042582_1_0_6"/>
<dbReference type="Proteomes" id="UP000001866">
    <property type="component" value="Chromosome"/>
</dbReference>
<dbReference type="GO" id="GO:0005829">
    <property type="term" value="C:cytosol"/>
    <property type="evidence" value="ECO:0007669"/>
    <property type="project" value="TreeGrafter"/>
</dbReference>
<dbReference type="GO" id="GO:0005524">
    <property type="term" value="F:ATP binding"/>
    <property type="evidence" value="ECO:0007669"/>
    <property type="project" value="UniProtKB-UniRule"/>
</dbReference>
<dbReference type="GO" id="GO:0005536">
    <property type="term" value="F:D-glucose binding"/>
    <property type="evidence" value="ECO:0007669"/>
    <property type="project" value="InterPro"/>
</dbReference>
<dbReference type="GO" id="GO:0004340">
    <property type="term" value="F:glucokinase activity"/>
    <property type="evidence" value="ECO:0007669"/>
    <property type="project" value="UniProtKB-UniRule"/>
</dbReference>
<dbReference type="GO" id="GO:0006096">
    <property type="term" value="P:glycolytic process"/>
    <property type="evidence" value="ECO:0007669"/>
    <property type="project" value="UniProtKB-UniRule"/>
</dbReference>
<dbReference type="CDD" id="cd24008">
    <property type="entry name" value="ASKHA_NBD_GLK"/>
    <property type="match status" value="1"/>
</dbReference>
<dbReference type="FunFam" id="3.30.420.40:FF:000045">
    <property type="entry name" value="Glucokinase"/>
    <property type="match status" value="1"/>
</dbReference>
<dbReference type="FunFam" id="3.40.367.20:FF:000002">
    <property type="entry name" value="Glucokinase"/>
    <property type="match status" value="1"/>
</dbReference>
<dbReference type="Gene3D" id="3.30.420.40">
    <property type="match status" value="1"/>
</dbReference>
<dbReference type="Gene3D" id="3.40.367.20">
    <property type="match status" value="1"/>
</dbReference>
<dbReference type="HAMAP" id="MF_00524">
    <property type="entry name" value="Glucokinase"/>
    <property type="match status" value="1"/>
</dbReference>
<dbReference type="InterPro" id="IPR043129">
    <property type="entry name" value="ATPase_NBD"/>
</dbReference>
<dbReference type="InterPro" id="IPR050201">
    <property type="entry name" value="Bacterial_glucokinase"/>
</dbReference>
<dbReference type="InterPro" id="IPR003836">
    <property type="entry name" value="Glucokinase"/>
</dbReference>
<dbReference type="NCBIfam" id="TIGR00749">
    <property type="entry name" value="glk"/>
    <property type="match status" value="1"/>
</dbReference>
<dbReference type="NCBIfam" id="NF001414">
    <property type="entry name" value="PRK00292.1-1"/>
    <property type="match status" value="1"/>
</dbReference>
<dbReference type="NCBIfam" id="NF001416">
    <property type="entry name" value="PRK00292.1-3"/>
    <property type="match status" value="1"/>
</dbReference>
<dbReference type="NCBIfam" id="NF009073">
    <property type="entry name" value="PRK12408.1"/>
    <property type="match status" value="1"/>
</dbReference>
<dbReference type="PANTHER" id="PTHR47690">
    <property type="entry name" value="GLUCOKINASE"/>
    <property type="match status" value="1"/>
</dbReference>
<dbReference type="PANTHER" id="PTHR47690:SF1">
    <property type="entry name" value="GLUCOKINASE"/>
    <property type="match status" value="1"/>
</dbReference>
<dbReference type="Pfam" id="PF02685">
    <property type="entry name" value="Glucokinase"/>
    <property type="match status" value="1"/>
</dbReference>
<dbReference type="SUPFAM" id="SSF53067">
    <property type="entry name" value="Actin-like ATPase domain"/>
    <property type="match status" value="1"/>
</dbReference>
<sequence length="321" mass="34638">MTKYALVGDVGGTNARLALCDIASGEISQAKTYSGLDYPSLEAVVRVYLDEHSVSVEDGCIAIACPITGDWVAMTNHTWAFSIAEMKKNLGFSHLEIINDFTAVSMAIPMLKKEHLIQFGGGEPVDGKPIAVYGAGTGLGVAHLVHVDKRWISLPGEGGHVDFAPNSEEEAMILEILRAEIGHVSAERVLSGPGLVNLYRAIVKSDNRLPENLRPKDITERALADNCIDCRRALSLFCVIMGRFGGDLALTMGTYGGVYIAGGIVPRFLEFFKASGFRGGFEDKGRFKDYVHGIPVYLIVHDNPGLLGSGAHLRQTLGHIL</sequence>
<accession>B4TCD7</accession>
<comment type="catalytic activity">
    <reaction evidence="1">
        <text>D-glucose + ATP = D-glucose 6-phosphate + ADP + H(+)</text>
        <dbReference type="Rhea" id="RHEA:17825"/>
        <dbReference type="ChEBI" id="CHEBI:4167"/>
        <dbReference type="ChEBI" id="CHEBI:15378"/>
        <dbReference type="ChEBI" id="CHEBI:30616"/>
        <dbReference type="ChEBI" id="CHEBI:61548"/>
        <dbReference type="ChEBI" id="CHEBI:456216"/>
        <dbReference type="EC" id="2.7.1.2"/>
    </reaction>
</comment>
<comment type="subcellular location">
    <subcellularLocation>
        <location evidence="1">Cytoplasm</location>
    </subcellularLocation>
</comment>
<comment type="similarity">
    <text evidence="1">Belongs to the bacterial glucokinase family.</text>
</comment>
<protein>
    <recommendedName>
        <fullName evidence="1">Glucokinase</fullName>
        <ecNumber evidence="1">2.7.1.2</ecNumber>
    </recommendedName>
    <alternativeName>
        <fullName evidence="1">Glucose kinase</fullName>
    </alternativeName>
</protein>
<evidence type="ECO:0000255" key="1">
    <source>
        <dbReference type="HAMAP-Rule" id="MF_00524"/>
    </source>
</evidence>
<reference key="1">
    <citation type="journal article" date="2011" name="J. Bacteriol.">
        <title>Comparative genomics of 28 Salmonella enterica isolates: evidence for CRISPR-mediated adaptive sublineage evolution.</title>
        <authorList>
            <person name="Fricke W.F."/>
            <person name="Mammel M.K."/>
            <person name="McDermott P.F."/>
            <person name="Tartera C."/>
            <person name="White D.G."/>
            <person name="Leclerc J.E."/>
            <person name="Ravel J."/>
            <person name="Cebula T.A."/>
        </authorList>
    </citation>
    <scope>NUCLEOTIDE SEQUENCE [LARGE SCALE GENOMIC DNA]</scope>
    <source>
        <strain>SL476</strain>
    </source>
</reference>
<keyword id="KW-0067">ATP-binding</keyword>
<keyword id="KW-0963">Cytoplasm</keyword>
<keyword id="KW-0324">Glycolysis</keyword>
<keyword id="KW-0418">Kinase</keyword>
<keyword id="KW-0547">Nucleotide-binding</keyword>
<keyword id="KW-0808">Transferase</keyword>
<gene>
    <name evidence="1" type="primary">glk</name>
    <name type="ordered locus">SeHA_C2661</name>
</gene>
<name>GLK_SALHS</name>
<proteinExistence type="inferred from homology"/>
<feature type="chain" id="PRO_1000127721" description="Glucokinase">
    <location>
        <begin position="1"/>
        <end position="321"/>
    </location>
</feature>
<feature type="binding site" evidence="1">
    <location>
        <begin position="8"/>
        <end position="13"/>
    </location>
    <ligand>
        <name>ATP</name>
        <dbReference type="ChEBI" id="CHEBI:30616"/>
    </ligand>
</feature>
<organism>
    <name type="scientific">Salmonella heidelberg (strain SL476)</name>
    <dbReference type="NCBI Taxonomy" id="454169"/>
    <lineage>
        <taxon>Bacteria</taxon>
        <taxon>Pseudomonadati</taxon>
        <taxon>Pseudomonadota</taxon>
        <taxon>Gammaproteobacteria</taxon>
        <taxon>Enterobacterales</taxon>
        <taxon>Enterobacteriaceae</taxon>
        <taxon>Salmonella</taxon>
    </lineage>
</organism>